<proteinExistence type="evidence at protein level"/>
<organism>
    <name type="scientific">Rhizobium leguminosarum bv. viciae</name>
    <dbReference type="NCBI Taxonomy" id="387"/>
    <lineage>
        <taxon>Bacteria</taxon>
        <taxon>Pseudomonadati</taxon>
        <taxon>Pseudomonadota</taxon>
        <taxon>Alphaproteobacteria</taxon>
        <taxon>Hyphomicrobiales</taxon>
        <taxon>Rhizobiaceae</taxon>
        <taxon>Rhizobium/Agrobacterium group</taxon>
        <taxon>Rhizobium</taxon>
    </lineage>
</organism>
<dbReference type="GO" id="GO:0005576">
    <property type="term" value="C:extracellular region"/>
    <property type="evidence" value="ECO:0007669"/>
    <property type="project" value="UniProtKB-SubCell"/>
</dbReference>
<dbReference type="GO" id="GO:0042742">
    <property type="term" value="P:defense response to bacterium"/>
    <property type="evidence" value="ECO:0007669"/>
    <property type="project" value="UniProtKB-KW"/>
</dbReference>
<dbReference type="GO" id="GO:0031640">
    <property type="term" value="P:killing of cells of another organism"/>
    <property type="evidence" value="ECO:0007669"/>
    <property type="project" value="UniProtKB-KW"/>
</dbReference>
<feature type="chain" id="PRO_0000110581" description="Bacteriocin">
    <location>
        <begin position="1"/>
        <end position="8" status="greater than"/>
    </location>
</feature>
<feature type="non-terminal residue" evidence="2">
    <location>
        <position position="8"/>
    </location>
</feature>
<keyword id="KW-0044">Antibiotic</keyword>
<keyword id="KW-0929">Antimicrobial</keyword>
<keyword id="KW-0078">Bacteriocin</keyword>
<keyword id="KW-0903">Direct protein sequencing</keyword>
<keyword id="KW-0964">Secreted</keyword>
<evidence type="ECO:0000269" key="1">
    <source ref="1"/>
</evidence>
<evidence type="ECO:0000303" key="2">
    <source ref="1"/>
</evidence>
<evidence type="ECO:0000305" key="3"/>
<sequence>ASILTNAS</sequence>
<protein>
    <recommendedName>
        <fullName>Bacteriocin</fullName>
    </recommendedName>
</protein>
<accession>P84703</accession>
<name>BACT_RHILV</name>
<reference evidence="3" key="1">
    <citation type="submission" date="2005-10" db="UniProtKB">
        <title>Isolation and characterization of bacteriocin like protein from Rhizobium leguminosarum bv. viciae.</title>
        <authorList>
            <person name="Naeem F.I."/>
            <person name="Khan S.A."/>
            <person name="Mukhtar Z."/>
            <person name="Zafar Y."/>
            <person name="Malik K.A."/>
            <person name="Hafeez F.Y."/>
        </authorList>
    </citation>
    <scope>PROTEIN SEQUENCE</scope>
    <source>
        <strain evidence="1">LC31</strain>
    </source>
</reference>
<comment type="function">
    <text evidence="1">Narrow spectrum bacteriocin, active against closely related bacterial species.</text>
</comment>
<comment type="subcellular location">
    <subcellularLocation>
        <location evidence="1">Secreted</location>
    </subcellularLocation>
</comment>